<name>RL13_THEP1</name>
<evidence type="ECO:0000255" key="1">
    <source>
        <dbReference type="HAMAP-Rule" id="MF_01366"/>
    </source>
</evidence>
<evidence type="ECO:0000305" key="2"/>
<proteinExistence type="inferred from homology"/>
<sequence length="149" mass="17284">MARYFPVQKTTMIKPEEVERKWYVVDASGKVLGRLATRIAKILMGKHKPNYTPHVDTGDYVIVVNADKVVLTGKKLDQKVYYWHSGYPGGLKSLTARQMLEKHPERLIWLAVKRMLPKNRKGRKMLKRLKVYASPEHPHQAQKPEPIEL</sequence>
<gene>
    <name evidence="1" type="primary">rplM</name>
    <name type="ordered locus">Tpet_1340</name>
</gene>
<organism>
    <name type="scientific">Thermotoga petrophila (strain ATCC BAA-488 / DSM 13995 / JCM 10881 / RKU-1)</name>
    <dbReference type="NCBI Taxonomy" id="390874"/>
    <lineage>
        <taxon>Bacteria</taxon>
        <taxon>Thermotogati</taxon>
        <taxon>Thermotogota</taxon>
        <taxon>Thermotogae</taxon>
        <taxon>Thermotogales</taxon>
        <taxon>Thermotogaceae</taxon>
        <taxon>Thermotoga</taxon>
    </lineage>
</organism>
<dbReference type="EMBL" id="CP000702">
    <property type="protein sequence ID" value="ABQ47354.1"/>
    <property type="molecule type" value="Genomic_DNA"/>
</dbReference>
<dbReference type="RefSeq" id="WP_004081738.1">
    <property type="nucleotide sequence ID" value="NC_009486.1"/>
</dbReference>
<dbReference type="SMR" id="A5IMD1"/>
<dbReference type="STRING" id="390874.Tpet_1340"/>
<dbReference type="KEGG" id="tpt:Tpet_1340"/>
<dbReference type="eggNOG" id="COG0102">
    <property type="taxonomic scope" value="Bacteria"/>
</dbReference>
<dbReference type="HOGENOM" id="CLU_082184_2_2_0"/>
<dbReference type="Proteomes" id="UP000006558">
    <property type="component" value="Chromosome"/>
</dbReference>
<dbReference type="GO" id="GO:0022625">
    <property type="term" value="C:cytosolic large ribosomal subunit"/>
    <property type="evidence" value="ECO:0007669"/>
    <property type="project" value="TreeGrafter"/>
</dbReference>
<dbReference type="GO" id="GO:0003729">
    <property type="term" value="F:mRNA binding"/>
    <property type="evidence" value="ECO:0007669"/>
    <property type="project" value="TreeGrafter"/>
</dbReference>
<dbReference type="GO" id="GO:0003735">
    <property type="term" value="F:structural constituent of ribosome"/>
    <property type="evidence" value="ECO:0007669"/>
    <property type="project" value="InterPro"/>
</dbReference>
<dbReference type="GO" id="GO:0017148">
    <property type="term" value="P:negative regulation of translation"/>
    <property type="evidence" value="ECO:0007669"/>
    <property type="project" value="TreeGrafter"/>
</dbReference>
<dbReference type="GO" id="GO:0006412">
    <property type="term" value="P:translation"/>
    <property type="evidence" value="ECO:0007669"/>
    <property type="project" value="UniProtKB-UniRule"/>
</dbReference>
<dbReference type="CDD" id="cd00392">
    <property type="entry name" value="Ribosomal_L13"/>
    <property type="match status" value="1"/>
</dbReference>
<dbReference type="FunFam" id="3.90.1180.10:FF:000001">
    <property type="entry name" value="50S ribosomal protein L13"/>
    <property type="match status" value="1"/>
</dbReference>
<dbReference type="Gene3D" id="3.90.1180.10">
    <property type="entry name" value="Ribosomal protein L13"/>
    <property type="match status" value="1"/>
</dbReference>
<dbReference type="HAMAP" id="MF_01366">
    <property type="entry name" value="Ribosomal_uL13"/>
    <property type="match status" value="1"/>
</dbReference>
<dbReference type="InterPro" id="IPR005822">
    <property type="entry name" value="Ribosomal_uL13"/>
</dbReference>
<dbReference type="InterPro" id="IPR005823">
    <property type="entry name" value="Ribosomal_uL13_bac-type"/>
</dbReference>
<dbReference type="InterPro" id="IPR023563">
    <property type="entry name" value="Ribosomal_uL13_CS"/>
</dbReference>
<dbReference type="InterPro" id="IPR036899">
    <property type="entry name" value="Ribosomal_uL13_sf"/>
</dbReference>
<dbReference type="NCBIfam" id="TIGR01066">
    <property type="entry name" value="rplM_bact"/>
    <property type="match status" value="1"/>
</dbReference>
<dbReference type="PANTHER" id="PTHR11545:SF2">
    <property type="entry name" value="LARGE RIBOSOMAL SUBUNIT PROTEIN UL13M"/>
    <property type="match status" value="1"/>
</dbReference>
<dbReference type="PANTHER" id="PTHR11545">
    <property type="entry name" value="RIBOSOMAL PROTEIN L13"/>
    <property type="match status" value="1"/>
</dbReference>
<dbReference type="Pfam" id="PF00572">
    <property type="entry name" value="Ribosomal_L13"/>
    <property type="match status" value="1"/>
</dbReference>
<dbReference type="PIRSF" id="PIRSF002181">
    <property type="entry name" value="Ribosomal_L13"/>
    <property type="match status" value="1"/>
</dbReference>
<dbReference type="SUPFAM" id="SSF52161">
    <property type="entry name" value="Ribosomal protein L13"/>
    <property type="match status" value="1"/>
</dbReference>
<dbReference type="PROSITE" id="PS00783">
    <property type="entry name" value="RIBOSOMAL_L13"/>
    <property type="match status" value="1"/>
</dbReference>
<keyword id="KW-0687">Ribonucleoprotein</keyword>
<keyword id="KW-0689">Ribosomal protein</keyword>
<reference key="1">
    <citation type="submission" date="2007-05" db="EMBL/GenBank/DDBJ databases">
        <title>Complete sequence of Thermotoga petrophila RKU-1.</title>
        <authorList>
            <consortium name="US DOE Joint Genome Institute"/>
            <person name="Copeland A."/>
            <person name="Lucas S."/>
            <person name="Lapidus A."/>
            <person name="Barry K."/>
            <person name="Glavina del Rio T."/>
            <person name="Dalin E."/>
            <person name="Tice H."/>
            <person name="Pitluck S."/>
            <person name="Sims D."/>
            <person name="Brettin T."/>
            <person name="Bruce D."/>
            <person name="Detter J.C."/>
            <person name="Han C."/>
            <person name="Tapia R."/>
            <person name="Schmutz J."/>
            <person name="Larimer F."/>
            <person name="Land M."/>
            <person name="Hauser L."/>
            <person name="Kyrpides N."/>
            <person name="Mikhailova N."/>
            <person name="Nelson K."/>
            <person name="Gogarten J.P."/>
            <person name="Noll K."/>
            <person name="Richardson P."/>
        </authorList>
    </citation>
    <scope>NUCLEOTIDE SEQUENCE [LARGE SCALE GENOMIC DNA]</scope>
    <source>
        <strain>ATCC BAA-488 / DSM 13995 / JCM 10881 / RKU-1</strain>
    </source>
</reference>
<comment type="function">
    <text evidence="1">This protein is one of the early assembly proteins of the 50S ribosomal subunit, although it is not seen to bind rRNA by itself. It is important during the early stages of 50S assembly.</text>
</comment>
<comment type="subunit">
    <text evidence="1">Part of the 50S ribosomal subunit.</text>
</comment>
<comment type="similarity">
    <text evidence="1">Belongs to the universal ribosomal protein uL13 family.</text>
</comment>
<protein>
    <recommendedName>
        <fullName evidence="1">Large ribosomal subunit protein uL13</fullName>
    </recommendedName>
    <alternativeName>
        <fullName evidence="2">50S ribosomal protein L13</fullName>
    </alternativeName>
</protein>
<feature type="chain" id="PRO_1000055485" description="Large ribosomal subunit protein uL13">
    <location>
        <begin position="1"/>
        <end position="149"/>
    </location>
</feature>
<accession>A5IMD1</accession>